<keyword id="KW-0997">Cell inner membrane</keyword>
<keyword id="KW-1003">Cell membrane</keyword>
<keyword id="KW-0418">Kinase</keyword>
<keyword id="KW-0472">Membrane</keyword>
<keyword id="KW-0598">Phosphotransferase system</keyword>
<keyword id="KW-1185">Reference proteome</keyword>
<keyword id="KW-0762">Sugar transport</keyword>
<keyword id="KW-0808">Transferase</keyword>
<keyword id="KW-0812">Transmembrane</keyword>
<keyword id="KW-1133">Transmembrane helix</keyword>
<keyword id="KW-0813">Transport</keyword>
<accession>Q5E5T6</accession>
<comment type="function">
    <text evidence="1">The phosphoenolpyruvate-dependent sugar phosphotransferase system (sugar PTS), a major carbohydrate active transport system, catalyzes the phosphorylation of incoming sugar substrates concomitantly with their translocation across the cell membrane. This system is involved in N-acetylmuramic acid (MurNAc) transport, yielding cytoplasmic MurNAc-6-P. Is also able to take up anhydro-N-acetylmuramic acid (anhMurNAc), but cannot phosphorylate the carbon 6, probably because of the 1,6-anhydro ring.</text>
</comment>
<comment type="catalytic activity">
    <reaction evidence="1">
        <text>N-acetyl-beta-D-muramate(out) + N(pros)-phospho-L-histidyl-[protein] = N-acetyl-beta-D-muramate 6-phosphate(in) + L-histidyl-[protein]</text>
        <dbReference type="Rhea" id="RHEA:33399"/>
        <dbReference type="Rhea" id="RHEA-COMP:9745"/>
        <dbReference type="Rhea" id="RHEA-COMP:9746"/>
        <dbReference type="ChEBI" id="CHEBI:29979"/>
        <dbReference type="ChEBI" id="CHEBI:58721"/>
        <dbReference type="ChEBI" id="CHEBI:64837"/>
        <dbReference type="ChEBI" id="CHEBI:64848"/>
        <dbReference type="EC" id="2.7.1.192"/>
    </reaction>
</comment>
<comment type="subcellular location">
    <subcellularLocation>
        <location evidence="3">Cell inner membrane</location>
        <topology evidence="3">Multi-pass membrane protein</topology>
    </subcellularLocation>
</comment>
<comment type="domain">
    <text evidence="2">The EIIB domain is phosphorylated by phospho-EIIA on a cysteinyl or histidyl residue, depending on the transported sugar. Then, it transfers the phosphoryl group to the sugar substrate concomitantly with the sugar uptake processed by the EIIC domain.</text>
</comment>
<comment type="domain">
    <text evidence="3">The EIIC domain forms the PTS system translocation channel and contains the specific substrate-binding site.</text>
</comment>
<proteinExistence type="inferred from homology"/>
<name>PTYBC_ALIF1</name>
<dbReference type="EC" id="2.7.1.192" evidence="1"/>
<dbReference type="EMBL" id="CP000020">
    <property type="protein sequence ID" value="AAW85610.1"/>
    <property type="molecule type" value="Genomic_DNA"/>
</dbReference>
<dbReference type="RefSeq" id="WP_011261745.1">
    <property type="nucleotide sequence ID" value="NC_006840.2"/>
</dbReference>
<dbReference type="RefSeq" id="YP_204498.1">
    <property type="nucleotide sequence ID" value="NC_006840.2"/>
</dbReference>
<dbReference type="SMR" id="Q5E5T6"/>
<dbReference type="STRING" id="312309.VF_1115"/>
<dbReference type="EnsemblBacteria" id="AAW85610">
    <property type="protein sequence ID" value="AAW85610"/>
    <property type="gene ID" value="VF_1115"/>
</dbReference>
<dbReference type="GeneID" id="54163787"/>
<dbReference type="KEGG" id="vfi:VF_1115"/>
<dbReference type="PATRIC" id="fig|312309.11.peg.1120"/>
<dbReference type="eggNOG" id="COG1263">
    <property type="taxonomic scope" value="Bacteria"/>
</dbReference>
<dbReference type="eggNOG" id="COG1264">
    <property type="taxonomic scope" value="Bacteria"/>
</dbReference>
<dbReference type="HOGENOM" id="CLU_012312_2_0_6"/>
<dbReference type="OrthoDB" id="9797715at2"/>
<dbReference type="Proteomes" id="UP000000537">
    <property type="component" value="Chromosome I"/>
</dbReference>
<dbReference type="GO" id="GO:0005886">
    <property type="term" value="C:plasma membrane"/>
    <property type="evidence" value="ECO:0007669"/>
    <property type="project" value="UniProtKB-SubCell"/>
</dbReference>
<dbReference type="GO" id="GO:0016301">
    <property type="term" value="F:kinase activity"/>
    <property type="evidence" value="ECO:0007669"/>
    <property type="project" value="UniProtKB-KW"/>
</dbReference>
<dbReference type="GO" id="GO:0008982">
    <property type="term" value="F:protein-N(PI)-phosphohistidine-sugar phosphotransferase activity"/>
    <property type="evidence" value="ECO:0007669"/>
    <property type="project" value="InterPro"/>
</dbReference>
<dbReference type="GO" id="GO:0090588">
    <property type="term" value="F:protein-phosphocysteine-N-acetylmuramate phosphotransferase system transporter activity"/>
    <property type="evidence" value="ECO:0007669"/>
    <property type="project" value="TreeGrafter"/>
</dbReference>
<dbReference type="GO" id="GO:0009401">
    <property type="term" value="P:phosphoenolpyruvate-dependent sugar phosphotransferase system"/>
    <property type="evidence" value="ECO:0007669"/>
    <property type="project" value="UniProtKB-KW"/>
</dbReference>
<dbReference type="CDD" id="cd00212">
    <property type="entry name" value="PTS_IIB_glc"/>
    <property type="match status" value="1"/>
</dbReference>
<dbReference type="FunFam" id="3.30.1360.60:FF:000001">
    <property type="entry name" value="PTS system glucose-specific IIBC component PtsG"/>
    <property type="match status" value="1"/>
</dbReference>
<dbReference type="Gene3D" id="3.30.1360.60">
    <property type="entry name" value="Glucose permease domain IIB"/>
    <property type="match status" value="1"/>
</dbReference>
<dbReference type="InterPro" id="IPR036878">
    <property type="entry name" value="Glu_permease_IIB"/>
</dbReference>
<dbReference type="InterPro" id="IPR018113">
    <property type="entry name" value="PTrfase_EIIB_Cys"/>
</dbReference>
<dbReference type="InterPro" id="IPR003352">
    <property type="entry name" value="PTS_EIIC"/>
</dbReference>
<dbReference type="InterPro" id="IPR013013">
    <property type="entry name" value="PTS_EIIC_1"/>
</dbReference>
<dbReference type="InterPro" id="IPR001996">
    <property type="entry name" value="PTS_IIB_1"/>
</dbReference>
<dbReference type="InterPro" id="IPR050558">
    <property type="entry name" value="PTS_Sugar-Specific_Components"/>
</dbReference>
<dbReference type="NCBIfam" id="NF007152">
    <property type="entry name" value="PRK09586.1"/>
    <property type="match status" value="1"/>
</dbReference>
<dbReference type="PANTHER" id="PTHR30175">
    <property type="entry name" value="PHOSPHOTRANSFERASE SYSTEM TRANSPORT PROTEIN"/>
    <property type="match status" value="1"/>
</dbReference>
<dbReference type="PANTHER" id="PTHR30175:SF3">
    <property type="entry name" value="PTS SYSTEM N-ACETYLMURAMIC ACID-SPECIFIC EIIBC COMPONENT"/>
    <property type="match status" value="1"/>
</dbReference>
<dbReference type="Pfam" id="PF00367">
    <property type="entry name" value="PTS_EIIB"/>
    <property type="match status" value="1"/>
</dbReference>
<dbReference type="Pfam" id="PF02378">
    <property type="entry name" value="PTS_EIIC"/>
    <property type="match status" value="1"/>
</dbReference>
<dbReference type="SUPFAM" id="SSF55604">
    <property type="entry name" value="Glucose permease domain IIB"/>
    <property type="match status" value="1"/>
</dbReference>
<dbReference type="PROSITE" id="PS51098">
    <property type="entry name" value="PTS_EIIB_TYPE_1"/>
    <property type="match status" value="1"/>
</dbReference>
<dbReference type="PROSITE" id="PS01035">
    <property type="entry name" value="PTS_EIIB_TYPE_1_CYS"/>
    <property type="match status" value="1"/>
</dbReference>
<dbReference type="PROSITE" id="PS51103">
    <property type="entry name" value="PTS_EIIC_TYPE_1"/>
    <property type="match status" value="1"/>
</dbReference>
<reference key="1">
    <citation type="journal article" date="2005" name="Proc. Natl. Acad. Sci. U.S.A.">
        <title>Complete genome sequence of Vibrio fischeri: a symbiotic bacterium with pathogenic congeners.</title>
        <authorList>
            <person name="Ruby E.G."/>
            <person name="Urbanowski M."/>
            <person name="Campbell J."/>
            <person name="Dunn A."/>
            <person name="Faini M."/>
            <person name="Gunsalus R."/>
            <person name="Lostroh P."/>
            <person name="Lupp C."/>
            <person name="McCann J."/>
            <person name="Millikan D."/>
            <person name="Schaefer A."/>
            <person name="Stabb E."/>
            <person name="Stevens A."/>
            <person name="Visick K."/>
            <person name="Whistler C."/>
            <person name="Greenberg E.P."/>
        </authorList>
    </citation>
    <scope>NUCLEOTIDE SEQUENCE [LARGE SCALE GENOMIC DNA]</scope>
    <source>
        <strain>ATCC 700601 / ES114</strain>
    </source>
</reference>
<organism>
    <name type="scientific">Aliivibrio fischeri (strain ATCC 700601 / ES114)</name>
    <name type="common">Vibrio fischeri</name>
    <dbReference type="NCBI Taxonomy" id="312309"/>
    <lineage>
        <taxon>Bacteria</taxon>
        <taxon>Pseudomonadati</taxon>
        <taxon>Pseudomonadota</taxon>
        <taxon>Gammaproteobacteria</taxon>
        <taxon>Vibrionales</taxon>
        <taxon>Vibrionaceae</taxon>
        <taxon>Aliivibrio</taxon>
    </lineage>
</organism>
<protein>
    <recommendedName>
        <fullName evidence="1">PTS system N-acetylmuramic acid-specific EIIBC component</fullName>
    </recommendedName>
    <alternativeName>
        <fullName evidence="1">EIIBC-MurNAc</fullName>
    </alternativeName>
    <domain>
        <recommendedName>
            <fullName evidence="1">N-acetylmuramic acid-specific phosphotransferase enzyme IIB component</fullName>
            <ecNumber evidence="1">2.7.1.192</ecNumber>
        </recommendedName>
        <alternativeName>
            <fullName evidence="1">PTS system N-acetylmuramic acid-specific EIIB component</fullName>
        </alternativeName>
    </domain>
    <domain>
        <recommendedName>
            <fullName evidence="1">N-acetylmuramic acid permease IIC component</fullName>
        </recommendedName>
        <alternativeName>
            <fullName evidence="1">PTS system N-acetylmuramic acid-specific EIIC component</fullName>
        </alternativeName>
    </domain>
</protein>
<evidence type="ECO:0000250" key="1">
    <source>
        <dbReference type="UniProtKB" id="P77272"/>
    </source>
</evidence>
<evidence type="ECO:0000255" key="2">
    <source>
        <dbReference type="PROSITE-ProRule" id="PRU00421"/>
    </source>
</evidence>
<evidence type="ECO:0000255" key="3">
    <source>
        <dbReference type="PROSITE-ProRule" id="PRU00426"/>
    </source>
</evidence>
<evidence type="ECO:0000256" key="4">
    <source>
        <dbReference type="SAM" id="MobiDB-lite"/>
    </source>
</evidence>
<gene>
    <name type="primary">murP</name>
    <name type="ordered locus">VF_1115</name>
</gene>
<feature type="chain" id="PRO_0000248961" description="PTS system N-acetylmuramic acid-specific EIIBC component">
    <location>
        <begin position="1"/>
        <end position="484"/>
    </location>
</feature>
<feature type="transmembrane region" description="Helical" evidence="3">
    <location>
        <begin position="126"/>
        <end position="146"/>
    </location>
</feature>
<feature type="transmembrane region" description="Helical" evidence="3">
    <location>
        <begin position="168"/>
        <end position="188"/>
    </location>
</feature>
<feature type="transmembrane region" description="Helical" evidence="3">
    <location>
        <begin position="194"/>
        <end position="214"/>
    </location>
</feature>
<feature type="transmembrane region" description="Helical" evidence="3">
    <location>
        <begin position="232"/>
        <end position="252"/>
    </location>
</feature>
<feature type="transmembrane region" description="Helical" evidence="3">
    <location>
        <begin position="273"/>
        <end position="293"/>
    </location>
</feature>
<feature type="transmembrane region" description="Helical" evidence="3">
    <location>
        <begin position="312"/>
        <end position="332"/>
    </location>
</feature>
<feature type="transmembrane region" description="Helical" evidence="3">
    <location>
        <begin position="345"/>
        <end position="365"/>
    </location>
</feature>
<feature type="transmembrane region" description="Helical" evidence="3">
    <location>
        <begin position="379"/>
        <end position="399"/>
    </location>
</feature>
<feature type="transmembrane region" description="Helical" evidence="3">
    <location>
        <begin position="404"/>
        <end position="424"/>
    </location>
</feature>
<feature type="transmembrane region" description="Helical" evidence="3">
    <location>
        <begin position="451"/>
        <end position="471"/>
    </location>
</feature>
<feature type="domain" description="PTS EIIB type-1" evidence="2">
    <location>
        <begin position="1"/>
        <end position="89"/>
    </location>
</feature>
<feature type="domain" description="PTS EIIC type-1" evidence="3">
    <location>
        <begin position="124"/>
        <end position="484"/>
    </location>
</feature>
<feature type="region of interest" description="Disordered" evidence="4">
    <location>
        <begin position="83"/>
        <end position="106"/>
    </location>
</feature>
<feature type="compositionally biased region" description="Basic and acidic residues" evidence="4">
    <location>
        <begin position="96"/>
        <end position="106"/>
    </location>
</feature>
<feature type="active site" description="Phosphocysteine intermediate; for EIIB activity" evidence="2">
    <location>
        <position position="28"/>
    </location>
</feature>
<sequence>MAKITTSMIQEILTAIGGKSNVIKCGNCMTRLRLTLHDDNLADRDTIKRIAGVMGLVESDDQFQIVLGPGKAQTAAEMMNEMMEGEEDNSASTTAESRDLKDVASEHKQKLKKKQTSAAQRFLSKFATIFTPLIPGFIAAGLLLGFATLLDQIYIIGNESPNANLVDLILYMKVFSKGLFSFLSILIGYNAQQAFGGSGVNGAILASLFVLGYNPDATSGIYSGMTDFFGHGIDPRGNIIGVLIAAIIGAGVEKKVRQYMPDNLDMILTSVVTLLIMGAVTFVVIMPIGGVLFQGMSWLFMNLNGNPIGSAILAGLFLISVMFGIHQGFVPVYFALMDAQGFNSLFPILAMAGAGQVGAALALYAKANKDALLRTQVKGSIIPGFLGIGEPLIYGVTLPRVKPFITACVGGAAGGFFIGLVSYMGLPVGLNTVFGPSGIVALPLMTSNAGIFAGMLVFAAGLVISYVAGFLATWFFGTKNVDLS</sequence>